<dbReference type="EMBL" id="CP000932">
    <property type="protein sequence ID" value="ACM64452.1"/>
    <property type="molecule type" value="Genomic_DNA"/>
</dbReference>
<dbReference type="RefSeq" id="WP_012661835.1">
    <property type="nucleotide sequence ID" value="NC_012039.1"/>
</dbReference>
<dbReference type="SMR" id="B9KD13"/>
<dbReference type="STRING" id="306263.Cla_1130"/>
<dbReference type="KEGG" id="cla:CLA_1130"/>
<dbReference type="PATRIC" id="fig|306263.5.peg.1115"/>
<dbReference type="eggNOG" id="ENOG5030YCA">
    <property type="taxonomic scope" value="Bacteria"/>
</dbReference>
<dbReference type="HOGENOM" id="CLU_120359_1_0_7"/>
<dbReference type="Proteomes" id="UP000007727">
    <property type="component" value="Chromosome"/>
</dbReference>
<dbReference type="HAMAP" id="MF_02110">
    <property type="entry name" value="UPF0763"/>
    <property type="match status" value="1"/>
</dbReference>
<dbReference type="InterPro" id="IPR019724">
    <property type="entry name" value="UPF0763"/>
</dbReference>
<dbReference type="Pfam" id="PF10788">
    <property type="entry name" value="DUF2603"/>
    <property type="match status" value="1"/>
</dbReference>
<accession>B9KD13</accession>
<evidence type="ECO:0000255" key="1">
    <source>
        <dbReference type="HAMAP-Rule" id="MF_02110"/>
    </source>
</evidence>
<protein>
    <recommendedName>
        <fullName evidence="1">UPF0763 protein Cla_1130</fullName>
    </recommendedName>
</protein>
<gene>
    <name type="ordered locus">Cla_1130</name>
</gene>
<proteinExistence type="inferred from homology"/>
<name>Y1130_CAMLR</name>
<sequence>MDSLSKKSSQDIINELSNYLGIEKHNQTVFHLTHINEKEKKLSLKNGHELAPEPWFIVDENGEVKTMFSVKTLIEFLQNAKEVQKDNFELKLEKAIYQQIPIDFNDVWTVAMDEIKHQVAKGVKEVNIDLDQLISNIHAKHPNLFINMKEMMQKVKPNERL</sequence>
<comment type="similarity">
    <text evidence="1">Belongs to the UPF0763 family.</text>
</comment>
<organism>
    <name type="scientific">Campylobacter lari (strain RM2100 / D67 / ATCC BAA-1060)</name>
    <dbReference type="NCBI Taxonomy" id="306263"/>
    <lineage>
        <taxon>Bacteria</taxon>
        <taxon>Pseudomonadati</taxon>
        <taxon>Campylobacterota</taxon>
        <taxon>Epsilonproteobacteria</taxon>
        <taxon>Campylobacterales</taxon>
        <taxon>Campylobacteraceae</taxon>
        <taxon>Campylobacter</taxon>
    </lineage>
</organism>
<keyword id="KW-1185">Reference proteome</keyword>
<reference key="1">
    <citation type="journal article" date="2008" name="Foodborne Pathog. Dis.">
        <title>The complete genome sequence and analysis of the human pathogen Campylobacter lari.</title>
        <authorList>
            <person name="Miller W.G."/>
            <person name="Wang G."/>
            <person name="Binnewies T.T."/>
            <person name="Parker C.T."/>
        </authorList>
    </citation>
    <scope>NUCLEOTIDE SEQUENCE [LARGE SCALE GENOMIC DNA]</scope>
    <source>
        <strain>RM2100 / D67 / ATCC BAA-1060</strain>
    </source>
</reference>
<feature type="chain" id="PRO_0000394783" description="UPF0763 protein Cla_1130">
    <location>
        <begin position="1"/>
        <end position="161"/>
    </location>
</feature>